<comment type="function">
    <text evidence="1">RuBisCO catalyzes two reactions: the carboxylation of D-ribulose 1,5-bisphosphate, the primary event in carbon dioxide fixation, as well as the oxidative fragmentation of the pentose substrate in the photorespiration process. Both reactions occur simultaneously and in competition at the same active site.</text>
</comment>
<comment type="catalytic activity">
    <reaction evidence="1">
        <text>2 (2R)-3-phosphoglycerate + 2 H(+) = D-ribulose 1,5-bisphosphate + CO2 + H2O</text>
        <dbReference type="Rhea" id="RHEA:23124"/>
        <dbReference type="ChEBI" id="CHEBI:15377"/>
        <dbReference type="ChEBI" id="CHEBI:15378"/>
        <dbReference type="ChEBI" id="CHEBI:16526"/>
        <dbReference type="ChEBI" id="CHEBI:57870"/>
        <dbReference type="ChEBI" id="CHEBI:58272"/>
        <dbReference type="EC" id="4.1.1.39"/>
    </reaction>
</comment>
<comment type="catalytic activity">
    <reaction evidence="1">
        <text>D-ribulose 1,5-bisphosphate + O2 = 2-phosphoglycolate + (2R)-3-phosphoglycerate + 2 H(+)</text>
        <dbReference type="Rhea" id="RHEA:36631"/>
        <dbReference type="ChEBI" id="CHEBI:15378"/>
        <dbReference type="ChEBI" id="CHEBI:15379"/>
        <dbReference type="ChEBI" id="CHEBI:57870"/>
        <dbReference type="ChEBI" id="CHEBI:58033"/>
        <dbReference type="ChEBI" id="CHEBI:58272"/>
    </reaction>
</comment>
<comment type="cofactor">
    <cofactor evidence="1">
        <name>Mg(2+)</name>
        <dbReference type="ChEBI" id="CHEBI:18420"/>
    </cofactor>
    <text evidence="1">Binds 1 Mg(2+) ion per subunit.</text>
</comment>
<comment type="subunit">
    <text evidence="1">Heterohexadecamer of 8 large chains and 8 small chains.</text>
</comment>
<comment type="subcellular location">
    <subcellularLocation>
        <location evidence="1">Carboxysome</location>
    </subcellularLocation>
</comment>
<comment type="miscellaneous">
    <text evidence="1">The basic functional RuBisCO is composed of a large chain homodimer in a 'head-to-tail' conformation. In form I RuBisCO this homodimer is arranged in a barrel-like tetramer with the small subunits forming a tetrameric 'cap' on each end of the 'barrel'.</text>
</comment>
<comment type="similarity">
    <text evidence="1">Belongs to the RuBisCO large chain family. Type I subfamily.</text>
</comment>
<reference key="1">
    <citation type="journal article" date="2007" name="PLoS Genet.">
        <title>Patterns and implications of gene gain and loss in the evolution of Prochlorococcus.</title>
        <authorList>
            <person name="Kettler G.C."/>
            <person name="Martiny A.C."/>
            <person name="Huang K."/>
            <person name="Zucker J."/>
            <person name="Coleman M.L."/>
            <person name="Rodrigue S."/>
            <person name="Chen F."/>
            <person name="Lapidus A."/>
            <person name="Ferriera S."/>
            <person name="Johnson J."/>
            <person name="Steglich C."/>
            <person name="Church G.M."/>
            <person name="Richardson P."/>
            <person name="Chisholm S.W."/>
        </authorList>
    </citation>
    <scope>NUCLEOTIDE SEQUENCE [LARGE SCALE GENOMIC DNA]</scope>
    <source>
        <strain>AS9601</strain>
    </source>
</reference>
<sequence length="471" mass="52574">MSKKYDAGVKEYRDTYWTPEYVPLDTDLLACFKCTGQEGVPREEVAAAVAAESSTGTWSTVWSELLTDLEFYKGRCYRIEDVPGDPEAFYAFIAYPLDLFEEGSITNVLTSLVGNVFGFKALRHLRLEDIRFPIAFIKTCGGPPNGIVVERDRLNKYGRPLLGCTIKPKLGLSGKNYGRVVYECLRGGLDLTKDDENINSQPFQRWRERFEFVAEAVKLAQQETGEVKGHYLNCTANTPEELYERAEFAKELDMPIIMHDYITGGFTANTGLANWCRKNGMLLHIHRAMHAVIDRHPKHGIHFRVLAKCLRLSGGDQLHTGTVVGKLEGDRQTTLGYIDNLRESFVPEDRSRGNFFDQDWGSMPGVFAVASGGIHVWHMPALLAIFGDDSCLQFGGGTHGHPWGSAAGAAANRVALEACVKARNAGREIEKESRDILMEAAKHSPELAIALETWKEIKFEFDTVDKLDVQG</sequence>
<name>RBL_PROMS</name>
<gene>
    <name evidence="1" type="primary">cbbL</name>
    <name evidence="1" type="synonym">rbcL</name>
    <name type="ordered locus">A9601_06061</name>
</gene>
<dbReference type="EC" id="4.1.1.39" evidence="1"/>
<dbReference type="EMBL" id="CP000551">
    <property type="protein sequence ID" value="ABM69892.1"/>
    <property type="molecule type" value="Genomic_DNA"/>
</dbReference>
<dbReference type="RefSeq" id="WP_002805854.1">
    <property type="nucleotide sequence ID" value="NC_008816.1"/>
</dbReference>
<dbReference type="SMR" id="A2BQ31"/>
<dbReference type="STRING" id="146891.A9601_06061"/>
<dbReference type="KEGG" id="pmb:A9601_06061"/>
<dbReference type="eggNOG" id="COG1850">
    <property type="taxonomic scope" value="Bacteria"/>
</dbReference>
<dbReference type="HOGENOM" id="CLU_031450_2_0_3"/>
<dbReference type="OrthoDB" id="9770811at2"/>
<dbReference type="Proteomes" id="UP000002590">
    <property type="component" value="Chromosome"/>
</dbReference>
<dbReference type="GO" id="GO:0031470">
    <property type="term" value="C:carboxysome"/>
    <property type="evidence" value="ECO:0007669"/>
    <property type="project" value="UniProtKB-SubCell"/>
</dbReference>
<dbReference type="GO" id="GO:0000287">
    <property type="term" value="F:magnesium ion binding"/>
    <property type="evidence" value="ECO:0007669"/>
    <property type="project" value="UniProtKB-UniRule"/>
</dbReference>
<dbReference type="GO" id="GO:0004497">
    <property type="term" value="F:monooxygenase activity"/>
    <property type="evidence" value="ECO:0007669"/>
    <property type="project" value="UniProtKB-KW"/>
</dbReference>
<dbReference type="GO" id="GO:0016984">
    <property type="term" value="F:ribulose-bisphosphate carboxylase activity"/>
    <property type="evidence" value="ECO:0007669"/>
    <property type="project" value="UniProtKB-UniRule"/>
</dbReference>
<dbReference type="GO" id="GO:0009853">
    <property type="term" value="P:photorespiration"/>
    <property type="evidence" value="ECO:0007669"/>
    <property type="project" value="UniProtKB-KW"/>
</dbReference>
<dbReference type="GO" id="GO:0019253">
    <property type="term" value="P:reductive pentose-phosphate cycle"/>
    <property type="evidence" value="ECO:0007669"/>
    <property type="project" value="UniProtKB-UniRule"/>
</dbReference>
<dbReference type="Gene3D" id="3.20.20.110">
    <property type="entry name" value="Ribulose bisphosphate carboxylase, large subunit, C-terminal domain"/>
    <property type="match status" value="1"/>
</dbReference>
<dbReference type="Gene3D" id="3.30.70.150">
    <property type="entry name" value="RuBisCO large subunit, N-terminal domain"/>
    <property type="match status" value="1"/>
</dbReference>
<dbReference type="HAMAP" id="MF_01338">
    <property type="entry name" value="RuBisCO_L_type1"/>
    <property type="match status" value="1"/>
</dbReference>
<dbReference type="InterPro" id="IPR033966">
    <property type="entry name" value="RuBisCO"/>
</dbReference>
<dbReference type="InterPro" id="IPR000685">
    <property type="entry name" value="RuBisCO_lsu_C"/>
</dbReference>
<dbReference type="InterPro" id="IPR036376">
    <property type="entry name" value="RuBisCO_lsu_C_sf"/>
</dbReference>
<dbReference type="InterPro" id="IPR017443">
    <property type="entry name" value="RuBisCO_lsu_fd_N"/>
</dbReference>
<dbReference type="InterPro" id="IPR036422">
    <property type="entry name" value="RuBisCO_lsu_N_sf"/>
</dbReference>
<dbReference type="InterPro" id="IPR020888">
    <property type="entry name" value="RuBisCO_lsuI"/>
</dbReference>
<dbReference type="NCBIfam" id="NF003252">
    <property type="entry name" value="PRK04208.1"/>
    <property type="match status" value="1"/>
</dbReference>
<dbReference type="PANTHER" id="PTHR42704">
    <property type="entry name" value="RIBULOSE BISPHOSPHATE CARBOXYLASE"/>
    <property type="match status" value="1"/>
</dbReference>
<dbReference type="PANTHER" id="PTHR42704:SF17">
    <property type="entry name" value="RIBULOSE BISPHOSPHATE CARBOXYLASE LARGE CHAIN"/>
    <property type="match status" value="1"/>
</dbReference>
<dbReference type="Pfam" id="PF00016">
    <property type="entry name" value="RuBisCO_large"/>
    <property type="match status" value="1"/>
</dbReference>
<dbReference type="Pfam" id="PF02788">
    <property type="entry name" value="RuBisCO_large_N"/>
    <property type="match status" value="1"/>
</dbReference>
<dbReference type="SFLD" id="SFLDG01052">
    <property type="entry name" value="RuBisCO"/>
    <property type="match status" value="1"/>
</dbReference>
<dbReference type="SFLD" id="SFLDS00014">
    <property type="entry name" value="RuBisCO"/>
    <property type="match status" value="1"/>
</dbReference>
<dbReference type="SFLD" id="SFLDG00301">
    <property type="entry name" value="RuBisCO-like_proteins"/>
    <property type="match status" value="1"/>
</dbReference>
<dbReference type="SUPFAM" id="SSF51649">
    <property type="entry name" value="RuBisCo, C-terminal domain"/>
    <property type="match status" value="1"/>
</dbReference>
<dbReference type="SUPFAM" id="SSF54966">
    <property type="entry name" value="RuBisCO, large subunit, small (N-terminal) domain"/>
    <property type="match status" value="1"/>
</dbReference>
<keyword id="KW-1283">Bacterial microcompartment</keyword>
<keyword id="KW-0113">Calvin cycle</keyword>
<keyword id="KW-0120">Carbon dioxide fixation</keyword>
<keyword id="KW-1282">Carboxysome</keyword>
<keyword id="KW-0456">Lyase</keyword>
<keyword id="KW-0460">Magnesium</keyword>
<keyword id="KW-0479">Metal-binding</keyword>
<keyword id="KW-0503">Monooxygenase</keyword>
<keyword id="KW-0560">Oxidoreductase</keyword>
<keyword id="KW-0601">Photorespiration</keyword>
<keyword id="KW-0602">Photosynthesis</keyword>
<feature type="chain" id="PRO_0000299968" description="Ribulose bisphosphate carboxylase large chain">
    <location>
        <begin position="1"/>
        <end position="471"/>
    </location>
</feature>
<feature type="active site" description="Proton acceptor" evidence="1">
    <location>
        <position position="167"/>
    </location>
</feature>
<feature type="active site" description="Proton acceptor" evidence="1">
    <location>
        <position position="286"/>
    </location>
</feature>
<feature type="binding site" description="in homodimeric partner" evidence="1">
    <location>
        <position position="115"/>
    </location>
    <ligand>
        <name>substrate</name>
    </ligand>
</feature>
<feature type="binding site" evidence="1">
    <location>
        <position position="165"/>
    </location>
    <ligand>
        <name>substrate</name>
    </ligand>
</feature>
<feature type="binding site" evidence="1">
    <location>
        <position position="169"/>
    </location>
    <ligand>
        <name>substrate</name>
    </ligand>
</feature>
<feature type="binding site" description="via carbamate group" evidence="1">
    <location>
        <position position="193"/>
    </location>
    <ligand>
        <name>Mg(2+)</name>
        <dbReference type="ChEBI" id="CHEBI:18420"/>
    </ligand>
</feature>
<feature type="binding site" evidence="1">
    <location>
        <position position="195"/>
    </location>
    <ligand>
        <name>Mg(2+)</name>
        <dbReference type="ChEBI" id="CHEBI:18420"/>
    </ligand>
</feature>
<feature type="binding site" evidence="1">
    <location>
        <position position="196"/>
    </location>
    <ligand>
        <name>Mg(2+)</name>
        <dbReference type="ChEBI" id="CHEBI:18420"/>
    </ligand>
</feature>
<feature type="binding site" evidence="1">
    <location>
        <position position="287"/>
    </location>
    <ligand>
        <name>substrate</name>
    </ligand>
</feature>
<feature type="binding site" evidence="1">
    <location>
        <position position="319"/>
    </location>
    <ligand>
        <name>substrate</name>
    </ligand>
</feature>
<feature type="binding site" evidence="1">
    <location>
        <position position="371"/>
    </location>
    <ligand>
        <name>substrate</name>
    </ligand>
</feature>
<feature type="site" description="Transition state stabilizer" evidence="1">
    <location>
        <position position="326"/>
    </location>
</feature>
<feature type="modified residue" description="N6-carboxylysine" evidence="1">
    <location>
        <position position="193"/>
    </location>
</feature>
<proteinExistence type="inferred from homology"/>
<accession>A2BQ31</accession>
<protein>
    <recommendedName>
        <fullName evidence="1">Ribulose bisphosphate carboxylase large chain</fullName>
        <shortName evidence="1">RuBisCO large subunit</shortName>
        <ecNumber evidence="1">4.1.1.39</ecNumber>
    </recommendedName>
</protein>
<organism>
    <name type="scientific">Prochlorococcus marinus (strain AS9601)</name>
    <dbReference type="NCBI Taxonomy" id="146891"/>
    <lineage>
        <taxon>Bacteria</taxon>
        <taxon>Bacillati</taxon>
        <taxon>Cyanobacteriota</taxon>
        <taxon>Cyanophyceae</taxon>
        <taxon>Synechococcales</taxon>
        <taxon>Prochlorococcaceae</taxon>
        <taxon>Prochlorococcus</taxon>
    </lineage>
</organism>
<evidence type="ECO:0000255" key="1">
    <source>
        <dbReference type="HAMAP-Rule" id="MF_01338"/>
    </source>
</evidence>